<reference key="1">
    <citation type="journal article" date="1979" name="Biochemistry">
        <title>Complete amino acid sequence of rabbit beta 2-microglobulin.</title>
        <authorList>
            <person name="Gates F.T. III"/>
            <person name="Coligan J.E."/>
            <person name="Kindt T.J."/>
        </authorList>
    </citation>
    <scope>PROTEIN SEQUENCE</scope>
</reference>
<reference key="2">
    <citation type="journal article" date="1975" name="Science">
        <title>Partial amino acid sequence of rabbit beta2-microglobulin.</title>
        <authorList>
            <person name="Cunningham B.A."/>
            <person name="Berggard I."/>
        </authorList>
    </citation>
    <scope>PROTEIN SEQUENCE OF 1-35</scope>
</reference>
<reference key="3">
    <citation type="journal article" date="1988" name="Mol. Immunol.">
        <title>Biochemical properties of a novel rabbit thymocyte specific class I-like antigen.</title>
        <authorList>
            <person name="Wang C.R."/>
            <person name="Chen G.H."/>
            <person name="Newkirk M."/>
            <person name="Capra J.D."/>
            <person name="Mandy W.J."/>
        </authorList>
    </citation>
    <scope>NUCLEOTIDE SEQUENCE OF 1-30</scope>
</reference>
<protein>
    <recommendedName>
        <fullName>Beta-2-microglobulin</fullName>
    </recommendedName>
</protein>
<comment type="function">
    <text>Component of the class I major histocompatibility complex (MHC). Involved in the presentation of peptide antigens to the immune system.</text>
</comment>
<comment type="subunit">
    <text>Heterodimer of an alpha chain and a beta chain. Beta-2-microglobulin is the beta-chain of major histocompatibility complex class I molecules.</text>
</comment>
<comment type="subcellular location">
    <subcellularLocation>
        <location>Secreted</location>
    </subcellularLocation>
</comment>
<comment type="similarity">
    <text evidence="2">Belongs to the beta-2-microglobulin family.</text>
</comment>
<proteinExistence type="evidence at protein level"/>
<dbReference type="PIR" id="A02180">
    <property type="entry name" value="MGRBB2"/>
</dbReference>
<dbReference type="SMR" id="P01885"/>
<dbReference type="FunCoup" id="P01885">
    <property type="interactions" value="247"/>
</dbReference>
<dbReference type="STRING" id="9986.ENSOCUP00000014707"/>
<dbReference type="PaxDb" id="9986-ENSOCUP00000014707"/>
<dbReference type="eggNOG" id="ENOG502S8GM">
    <property type="taxonomic scope" value="Eukaryota"/>
</dbReference>
<dbReference type="InParanoid" id="P01885"/>
<dbReference type="Proteomes" id="UP000001811">
    <property type="component" value="Unplaced"/>
</dbReference>
<dbReference type="GO" id="GO:0005576">
    <property type="term" value="C:extracellular region"/>
    <property type="evidence" value="ECO:0007669"/>
    <property type="project" value="UniProtKB-SubCell"/>
</dbReference>
<dbReference type="GO" id="GO:0042612">
    <property type="term" value="C:MHC class I protein complex"/>
    <property type="evidence" value="ECO:0007669"/>
    <property type="project" value="UniProtKB-KW"/>
</dbReference>
<dbReference type="GO" id="GO:0002474">
    <property type="term" value="P:antigen processing and presentation of peptide antigen via MHC class I"/>
    <property type="evidence" value="ECO:0007669"/>
    <property type="project" value="UniProtKB-KW"/>
</dbReference>
<dbReference type="GO" id="GO:0006955">
    <property type="term" value="P:immune response"/>
    <property type="evidence" value="ECO:0007669"/>
    <property type="project" value="InterPro"/>
</dbReference>
<dbReference type="CDD" id="cd05770">
    <property type="entry name" value="IgC1_beta2m"/>
    <property type="match status" value="1"/>
</dbReference>
<dbReference type="FunFam" id="2.60.40.10:FF:001005">
    <property type="entry name" value="Beta-2-microglobulin"/>
    <property type="match status" value="1"/>
</dbReference>
<dbReference type="Gene3D" id="2.60.40.10">
    <property type="entry name" value="Immunoglobulins"/>
    <property type="match status" value="1"/>
</dbReference>
<dbReference type="InterPro" id="IPR015707">
    <property type="entry name" value="B2Microglobulin"/>
</dbReference>
<dbReference type="InterPro" id="IPR007110">
    <property type="entry name" value="Ig-like_dom"/>
</dbReference>
<dbReference type="InterPro" id="IPR036179">
    <property type="entry name" value="Ig-like_dom_sf"/>
</dbReference>
<dbReference type="InterPro" id="IPR013783">
    <property type="entry name" value="Ig-like_fold"/>
</dbReference>
<dbReference type="InterPro" id="IPR003006">
    <property type="entry name" value="Ig/MHC_CS"/>
</dbReference>
<dbReference type="InterPro" id="IPR003597">
    <property type="entry name" value="Ig_C1-set"/>
</dbReference>
<dbReference type="InterPro" id="IPR050160">
    <property type="entry name" value="MHC/Immunoglobulin"/>
</dbReference>
<dbReference type="PANTHER" id="PTHR19944:SF62">
    <property type="entry name" value="BETA-2-MICROGLOBULIN"/>
    <property type="match status" value="1"/>
</dbReference>
<dbReference type="PANTHER" id="PTHR19944">
    <property type="entry name" value="MHC CLASS II-RELATED"/>
    <property type="match status" value="1"/>
</dbReference>
<dbReference type="Pfam" id="PF07654">
    <property type="entry name" value="C1-set"/>
    <property type="match status" value="1"/>
</dbReference>
<dbReference type="SMART" id="SM00407">
    <property type="entry name" value="IGc1"/>
    <property type="match status" value="1"/>
</dbReference>
<dbReference type="SUPFAM" id="SSF48726">
    <property type="entry name" value="Immunoglobulin"/>
    <property type="match status" value="1"/>
</dbReference>
<dbReference type="PROSITE" id="PS50835">
    <property type="entry name" value="IG_LIKE"/>
    <property type="match status" value="1"/>
</dbReference>
<dbReference type="PROSITE" id="PS00290">
    <property type="entry name" value="IG_MHC"/>
    <property type="match status" value="1"/>
</dbReference>
<sequence>VQRAPNVQVYSRHPAENGKPNFLNCYVSGFHPPQIDIELLKNGVKIENVEQSDLSFNKDWSFYLLVHTEFTPNNKNEYSCRVKHVTLKEPMTVKWDRDY</sequence>
<name>B2MG_RABIT</name>
<keyword id="KW-0903">Direct protein sequencing</keyword>
<keyword id="KW-1015">Disulfide bond</keyword>
<keyword id="KW-0391">Immunity</keyword>
<keyword id="KW-0393">Immunoglobulin domain</keyword>
<keyword id="KW-0490">MHC I</keyword>
<keyword id="KW-1185">Reference proteome</keyword>
<keyword id="KW-0964">Secreted</keyword>
<evidence type="ECO:0000255" key="1">
    <source>
        <dbReference type="PROSITE-ProRule" id="PRU00114"/>
    </source>
</evidence>
<evidence type="ECO:0000305" key="2"/>
<feature type="chain" id="PRO_0000080737" description="Beta-2-microglobulin">
    <location>
        <begin position="1"/>
        <end position="99"/>
    </location>
</feature>
<feature type="domain" description="Ig-like C1-type">
    <location>
        <begin position="5"/>
        <end position="92"/>
    </location>
</feature>
<feature type="disulfide bond" evidence="1">
    <location>
        <begin position="25"/>
        <end position="80"/>
    </location>
</feature>
<feature type="sequence conflict" description="In Ref. 2; AA sequence." evidence="2" ref="2">
    <original>P</original>
    <variation>D</variation>
    <location>
        <position position="20"/>
    </location>
</feature>
<feature type="sequence conflict" description="In Ref. 2; AA sequence." evidence="2" ref="2">
    <original>PQ</original>
    <variation>SD</variation>
    <location>
        <begin position="33"/>
        <end position="34"/>
    </location>
</feature>
<accession>P01885</accession>
<gene>
    <name type="primary">B2M</name>
</gene>
<organism>
    <name type="scientific">Oryctolagus cuniculus</name>
    <name type="common">Rabbit</name>
    <dbReference type="NCBI Taxonomy" id="9986"/>
    <lineage>
        <taxon>Eukaryota</taxon>
        <taxon>Metazoa</taxon>
        <taxon>Chordata</taxon>
        <taxon>Craniata</taxon>
        <taxon>Vertebrata</taxon>
        <taxon>Euteleostomi</taxon>
        <taxon>Mammalia</taxon>
        <taxon>Eutheria</taxon>
        <taxon>Euarchontoglires</taxon>
        <taxon>Glires</taxon>
        <taxon>Lagomorpha</taxon>
        <taxon>Leporidae</taxon>
        <taxon>Oryctolagus</taxon>
    </lineage>
</organism>